<feature type="chain" id="PRO_0000265106" description="Four and a half LIM domains protein 5">
    <location>
        <begin position="1"/>
        <end position="284"/>
    </location>
</feature>
<feature type="domain" description="LIM zinc-binding 1" evidence="4">
    <location>
        <begin position="39"/>
        <end position="100"/>
    </location>
</feature>
<feature type="domain" description="LIM zinc-binding 2" evidence="4">
    <location>
        <begin position="101"/>
        <end position="160"/>
    </location>
</feature>
<feature type="domain" description="LIM zinc-binding 3" evidence="4">
    <location>
        <begin position="161"/>
        <end position="220"/>
    </location>
</feature>
<feature type="domain" description="LIM zinc-binding 4" evidence="4">
    <location>
        <begin position="223"/>
        <end position="283"/>
    </location>
</feature>
<feature type="zinc finger region" description="C4-type" evidence="3">
    <location>
        <begin position="8"/>
        <end position="32"/>
    </location>
</feature>
<feature type="sequence conflict" description="In Ref. 1; BAE02504." evidence="5" ref="1">
    <original>G</original>
    <variation>E</variation>
    <location>
        <position position="64"/>
    </location>
</feature>
<evidence type="ECO:0000250" key="1"/>
<evidence type="ECO:0000250" key="2">
    <source>
        <dbReference type="UniProtKB" id="Q9WTX7"/>
    </source>
</evidence>
<evidence type="ECO:0000255" key="3"/>
<evidence type="ECO:0000255" key="4">
    <source>
        <dbReference type="PROSITE-ProRule" id="PRU00125"/>
    </source>
</evidence>
<evidence type="ECO:0000305" key="5"/>
<protein>
    <recommendedName>
        <fullName>Four and a half LIM domains protein 5</fullName>
        <shortName>FHL-5</shortName>
    </recommendedName>
</protein>
<keyword id="KW-0440">LIM domain</keyword>
<keyword id="KW-0479">Metal-binding</keyword>
<keyword id="KW-0539">Nucleus</keyword>
<keyword id="KW-1185">Reference proteome</keyword>
<keyword id="KW-0677">Repeat</keyword>
<keyword id="KW-0862">Zinc</keyword>
<keyword id="KW-0863">Zinc-finger</keyword>
<name>FHL5_MACFA</name>
<reference key="1">
    <citation type="submission" date="2005-06" db="EMBL/GenBank/DDBJ databases">
        <title>DNA sequences of macaque genes expressed in brain or testis and its evolutionary implications.</title>
        <authorList>
            <consortium name="International consortium for macaque cDNA sequencing and analysis"/>
        </authorList>
    </citation>
    <scope>NUCLEOTIDE SEQUENCE [LARGE SCALE MRNA]</scope>
    <source>
        <tissue>Testis</tissue>
    </source>
</reference>
<accession>Q4R7A4</accession>
<accession>Q4R315</accession>
<proteinExistence type="evidence at transcript level"/>
<organism>
    <name type="scientific">Macaca fascicularis</name>
    <name type="common">Crab-eating macaque</name>
    <name type="synonym">Cynomolgus monkey</name>
    <dbReference type="NCBI Taxonomy" id="9541"/>
    <lineage>
        <taxon>Eukaryota</taxon>
        <taxon>Metazoa</taxon>
        <taxon>Chordata</taxon>
        <taxon>Craniata</taxon>
        <taxon>Vertebrata</taxon>
        <taxon>Euteleostomi</taxon>
        <taxon>Mammalia</taxon>
        <taxon>Eutheria</taxon>
        <taxon>Euarchontoglires</taxon>
        <taxon>Primates</taxon>
        <taxon>Haplorrhini</taxon>
        <taxon>Catarrhini</taxon>
        <taxon>Cercopithecidae</taxon>
        <taxon>Cercopithecinae</taxon>
        <taxon>Macaca</taxon>
    </lineage>
</organism>
<dbReference type="EMBL" id="AB168917">
    <property type="protein sequence ID" value="BAE01018.1"/>
    <property type="molecule type" value="mRNA"/>
</dbReference>
<dbReference type="EMBL" id="AB179453">
    <property type="protein sequence ID" value="BAE02504.1"/>
    <property type="molecule type" value="mRNA"/>
</dbReference>
<dbReference type="RefSeq" id="NP_001270282.1">
    <property type="nucleotide sequence ID" value="NM_001283353.1"/>
</dbReference>
<dbReference type="RefSeq" id="XP_005552380.1">
    <property type="nucleotide sequence ID" value="XM_005552323.2"/>
</dbReference>
<dbReference type="SMR" id="Q4R7A4"/>
<dbReference type="STRING" id="9541.ENSMFAP00000038696"/>
<dbReference type="GeneID" id="101926184"/>
<dbReference type="KEGG" id="mcf:101926184"/>
<dbReference type="CTD" id="9457"/>
<dbReference type="eggNOG" id="KOG1704">
    <property type="taxonomic scope" value="Eukaryota"/>
</dbReference>
<dbReference type="OrthoDB" id="7at314294"/>
<dbReference type="Proteomes" id="UP000233100">
    <property type="component" value="Unplaced"/>
</dbReference>
<dbReference type="GO" id="GO:0005634">
    <property type="term" value="C:nucleus"/>
    <property type="evidence" value="ECO:0007669"/>
    <property type="project" value="UniProtKB-SubCell"/>
</dbReference>
<dbReference type="GO" id="GO:0030018">
    <property type="term" value="C:Z disc"/>
    <property type="evidence" value="ECO:0007669"/>
    <property type="project" value="TreeGrafter"/>
</dbReference>
<dbReference type="GO" id="GO:0003713">
    <property type="term" value="F:transcription coactivator activity"/>
    <property type="evidence" value="ECO:0007669"/>
    <property type="project" value="TreeGrafter"/>
</dbReference>
<dbReference type="GO" id="GO:0008270">
    <property type="term" value="F:zinc ion binding"/>
    <property type="evidence" value="ECO:0007669"/>
    <property type="project" value="UniProtKB-KW"/>
</dbReference>
<dbReference type="GO" id="GO:0045944">
    <property type="term" value="P:positive regulation of transcription by RNA polymerase II"/>
    <property type="evidence" value="ECO:0007669"/>
    <property type="project" value="TreeGrafter"/>
</dbReference>
<dbReference type="CDD" id="cd09343">
    <property type="entry name" value="LIM1_FHL"/>
    <property type="match status" value="1"/>
</dbReference>
<dbReference type="CDD" id="cd09428">
    <property type="entry name" value="LIM2_FHL5"/>
    <property type="match status" value="1"/>
</dbReference>
<dbReference type="CDD" id="cd09346">
    <property type="entry name" value="LIM3_FHL"/>
    <property type="match status" value="1"/>
</dbReference>
<dbReference type="CDD" id="cd09347">
    <property type="entry name" value="LIM4_FHL"/>
    <property type="match status" value="1"/>
</dbReference>
<dbReference type="FunFam" id="2.10.110.10:FF:000013">
    <property type="entry name" value="Four and a half LIM domains 1"/>
    <property type="match status" value="1"/>
</dbReference>
<dbReference type="FunFam" id="2.10.110.10:FF:000030">
    <property type="entry name" value="Four and a half LIM domains protein 2"/>
    <property type="match status" value="1"/>
</dbReference>
<dbReference type="FunFam" id="2.10.110.10:FF:000048">
    <property type="entry name" value="Four and a half LIM domains protein 2"/>
    <property type="match status" value="1"/>
</dbReference>
<dbReference type="FunFam" id="2.10.110.10:FF:000049">
    <property type="entry name" value="Four and a half LIM domains protein 2"/>
    <property type="match status" value="1"/>
</dbReference>
<dbReference type="Gene3D" id="2.10.110.10">
    <property type="entry name" value="Cysteine Rich Protein"/>
    <property type="match status" value="4"/>
</dbReference>
<dbReference type="InterPro" id="IPR042947">
    <property type="entry name" value="FHL5_LIM2"/>
</dbReference>
<dbReference type="InterPro" id="IPR056807">
    <property type="entry name" value="LIM_FHL1/2/3/5_N"/>
</dbReference>
<dbReference type="InterPro" id="IPR001781">
    <property type="entry name" value="Znf_LIM"/>
</dbReference>
<dbReference type="PANTHER" id="PTHR24205">
    <property type="entry name" value="FOUR AND A HALF LIM DOMAINS PROTEIN"/>
    <property type="match status" value="1"/>
</dbReference>
<dbReference type="PANTHER" id="PTHR24205:SF7">
    <property type="entry name" value="FOUR AND A HALF LIM DOMAINS PROTEIN 5"/>
    <property type="match status" value="1"/>
</dbReference>
<dbReference type="Pfam" id="PF00412">
    <property type="entry name" value="LIM"/>
    <property type="match status" value="4"/>
</dbReference>
<dbReference type="Pfam" id="PF25076">
    <property type="entry name" value="LIM_FHL2-3_N"/>
    <property type="match status" value="1"/>
</dbReference>
<dbReference type="SMART" id="SM00132">
    <property type="entry name" value="LIM"/>
    <property type="match status" value="4"/>
</dbReference>
<dbReference type="SUPFAM" id="SSF57716">
    <property type="entry name" value="Glucocorticoid receptor-like (DNA-binding domain)"/>
    <property type="match status" value="5"/>
</dbReference>
<dbReference type="PROSITE" id="PS00478">
    <property type="entry name" value="LIM_DOMAIN_1"/>
    <property type="match status" value="4"/>
</dbReference>
<dbReference type="PROSITE" id="PS50023">
    <property type="entry name" value="LIM_DOMAIN_2"/>
    <property type="match status" value="4"/>
</dbReference>
<gene>
    <name type="primary">FHL5</name>
    <name type="ORF">QtsA-15776</name>
    <name type="ORF">QtsA-20333</name>
</gene>
<comment type="function">
    <text evidence="1">May be involved in the regulation of spermatogenesis. Stimulates CREM transcriptional activity in a phosphorylation-independent manner (By similarity).</text>
</comment>
<comment type="subunit">
    <text evidence="2">Interacts with CREM (via the third LIM domain). Interacts (via second LIM domain) with SPAG8.</text>
</comment>
<comment type="subcellular location">
    <subcellularLocation>
        <location>Nucleus</location>
    </subcellularLocation>
    <text evidence="1">Nuclei of round and elongated spermatids.</text>
</comment>
<sequence length="284" mass="32609">MTTAQFYCQYCTASLLGKKYVLKDDSLFCVTCYDRVFSNYCEECKKPIESDSKDLCYKDRHWHGGCFKCTKCNHSLVEKPFAAKDERLLCTECYSNECSSKCFHCKRTIMPGSRKMEFKGNYWHETCFVCENCRQPIGTKPLISKESGNFCVPCFEKEFAHYCNFCKKVITSGGITFCDQLWHKECFLCSGCRKDLCEEQFMSRDDYPFCVDCYNHLYANKCVACSKPISGLTGAKFICFQDSQWHSECFNCGKCSVSLVGKGFLTQNKEIFCQKCGSGMDSDI</sequence>